<protein>
    <recommendedName>
        <fullName>Deoxyuridine 5'-triphosphate nucleotidohydrolase</fullName>
        <shortName>dUTPase</shortName>
        <ecNumber>3.6.1.23</ecNumber>
    </recommendedName>
    <alternativeName>
        <fullName>dUTP pyrophosphatase</fullName>
    </alternativeName>
</protein>
<organismHost>
    <name type="scientific">Chlorella</name>
    <dbReference type="NCBI Taxonomy" id="3071"/>
</organismHost>
<dbReference type="EC" id="3.6.1.23"/>
<dbReference type="EMBL" id="JF411744">
    <property type="protein sequence ID" value="AAC96912.1"/>
    <property type="molecule type" value="Genomic_DNA"/>
</dbReference>
<dbReference type="PIR" id="T18053">
    <property type="entry name" value="T18053"/>
</dbReference>
<dbReference type="RefSeq" id="NP_048907.1">
    <property type="nucleotide sequence ID" value="NC_000852.5"/>
</dbReference>
<dbReference type="SMR" id="O41033"/>
<dbReference type="GeneID" id="918013"/>
<dbReference type="KEGG" id="vg:918013"/>
<dbReference type="OrthoDB" id="12539at10239"/>
<dbReference type="UniPathway" id="UPA00610">
    <property type="reaction ID" value="UER00666"/>
</dbReference>
<dbReference type="Proteomes" id="UP000000862">
    <property type="component" value="Genome"/>
</dbReference>
<dbReference type="GO" id="GO:0004170">
    <property type="term" value="F:dUTP diphosphatase activity"/>
    <property type="evidence" value="ECO:0007669"/>
    <property type="project" value="UniProtKB-EC"/>
</dbReference>
<dbReference type="GO" id="GO:0000287">
    <property type="term" value="F:magnesium ion binding"/>
    <property type="evidence" value="ECO:0007669"/>
    <property type="project" value="InterPro"/>
</dbReference>
<dbReference type="GO" id="GO:0006226">
    <property type="term" value="P:dUMP biosynthetic process"/>
    <property type="evidence" value="ECO:0007669"/>
    <property type="project" value="UniProtKB-UniPathway"/>
</dbReference>
<dbReference type="GO" id="GO:0046081">
    <property type="term" value="P:dUTP catabolic process"/>
    <property type="evidence" value="ECO:0007669"/>
    <property type="project" value="InterPro"/>
</dbReference>
<dbReference type="CDD" id="cd07557">
    <property type="entry name" value="trimeric_dUTPase"/>
    <property type="match status" value="1"/>
</dbReference>
<dbReference type="Gene3D" id="2.70.40.10">
    <property type="match status" value="1"/>
</dbReference>
<dbReference type="InterPro" id="IPR008181">
    <property type="entry name" value="dUTPase"/>
</dbReference>
<dbReference type="InterPro" id="IPR029054">
    <property type="entry name" value="dUTPase-like"/>
</dbReference>
<dbReference type="InterPro" id="IPR036157">
    <property type="entry name" value="dUTPase-like_sf"/>
</dbReference>
<dbReference type="InterPro" id="IPR033704">
    <property type="entry name" value="dUTPase_trimeric"/>
</dbReference>
<dbReference type="NCBIfam" id="TIGR00576">
    <property type="entry name" value="dut"/>
    <property type="match status" value="1"/>
</dbReference>
<dbReference type="NCBIfam" id="NF001862">
    <property type="entry name" value="PRK00601.1"/>
    <property type="match status" value="1"/>
</dbReference>
<dbReference type="PANTHER" id="PTHR11241">
    <property type="entry name" value="DEOXYURIDINE 5'-TRIPHOSPHATE NUCLEOTIDOHYDROLASE"/>
    <property type="match status" value="1"/>
</dbReference>
<dbReference type="PANTHER" id="PTHR11241:SF0">
    <property type="entry name" value="DEOXYURIDINE 5'-TRIPHOSPHATE NUCLEOTIDOHYDROLASE"/>
    <property type="match status" value="1"/>
</dbReference>
<dbReference type="Pfam" id="PF00692">
    <property type="entry name" value="dUTPase"/>
    <property type="match status" value="1"/>
</dbReference>
<dbReference type="SUPFAM" id="SSF51283">
    <property type="entry name" value="dUTPase-like"/>
    <property type="match status" value="1"/>
</dbReference>
<reference key="1">
    <citation type="journal article" date="1997" name="Virology">
        <title>Analysis of 74 kb of DNA located at the right end of the 330-kb chlorella virus PBCV-1 genome.</title>
        <authorList>
            <person name="Li Y."/>
            <person name="Lu Z."/>
            <person name="Sun L."/>
            <person name="Ropp S."/>
            <person name="Kutish G.F."/>
            <person name="Rock D.L."/>
            <person name="van Etten J.L."/>
        </authorList>
    </citation>
    <scope>NUCLEOTIDE SEQUENCE [LARGE SCALE GENOMIC DNA]</scope>
</reference>
<gene>
    <name type="ordered locus">A551L</name>
</gene>
<evidence type="ECO:0000250" key="1"/>
<evidence type="ECO:0000305" key="2"/>
<feature type="chain" id="PRO_0000182969" description="Deoxyuridine 5'-triphosphate nucleotidohydrolase">
    <location>
        <begin position="1"/>
        <end position="141"/>
    </location>
</feature>
<organism>
    <name type="scientific">Paramecium bursaria Chlorella virus 1</name>
    <name type="common">PBCV-1</name>
    <dbReference type="NCBI Taxonomy" id="10506"/>
    <lineage>
        <taxon>Viruses</taxon>
        <taxon>Varidnaviria</taxon>
        <taxon>Bamfordvirae</taxon>
        <taxon>Nucleocytoviricota</taxon>
        <taxon>Megaviricetes</taxon>
        <taxon>Algavirales</taxon>
        <taxon>Phycodnaviridae</taxon>
        <taxon>Chlorovirus</taxon>
    </lineage>
</organism>
<comment type="function">
    <text evidence="1">This enzyme is involved in nucleotide metabolism: it produces dUMP, the immediate precursor of thymidine nucleotides and it decreases the intracellular concentration of dUTP so that uracil cannot be incorporated into DNA.</text>
</comment>
<comment type="catalytic activity">
    <reaction>
        <text>dUTP + H2O = dUMP + diphosphate + H(+)</text>
        <dbReference type="Rhea" id="RHEA:10248"/>
        <dbReference type="ChEBI" id="CHEBI:15377"/>
        <dbReference type="ChEBI" id="CHEBI:15378"/>
        <dbReference type="ChEBI" id="CHEBI:33019"/>
        <dbReference type="ChEBI" id="CHEBI:61555"/>
        <dbReference type="ChEBI" id="CHEBI:246422"/>
        <dbReference type="EC" id="3.6.1.23"/>
    </reaction>
</comment>
<comment type="cofactor">
    <cofactor evidence="1">
        <name>Mg(2+)</name>
        <dbReference type="ChEBI" id="CHEBI:18420"/>
    </cofactor>
</comment>
<comment type="pathway">
    <text>Pyrimidine metabolism; dUMP biosynthesis; dUMP from dCTP (dUTP route): step 2/2.</text>
</comment>
<comment type="similarity">
    <text evidence="2">Belongs to the dUTPase family.</text>
</comment>
<sequence length="141" mass="14879">MSSLLVKKLVESATTPMRGSEGAAGYDISSVEDVVVPAMGRIAVSTGISIRVPNGTYGRIAPRSGLAYKYGIDVLAGVIDSDYRGELKAILYNTTERDYIIKKGDRIAQLILEQIVTPDVAVVLELEDTARGGGGFGSTGI</sequence>
<accession>O41033</accession>
<name>DUT_PBCV1</name>
<keyword id="KW-0378">Hydrolase</keyword>
<keyword id="KW-0460">Magnesium</keyword>
<keyword id="KW-0479">Metal-binding</keyword>
<keyword id="KW-0546">Nucleotide metabolism</keyword>
<keyword id="KW-1185">Reference proteome</keyword>
<proteinExistence type="inferred from homology"/>